<name>DCUP_BACCN</name>
<accession>A7GM02</accession>
<feature type="chain" id="PRO_0000325626" description="Uroporphyrinogen decarboxylase">
    <location>
        <begin position="1"/>
        <end position="348"/>
    </location>
</feature>
<feature type="binding site" evidence="1">
    <location>
        <begin position="27"/>
        <end position="31"/>
    </location>
    <ligand>
        <name>substrate</name>
    </ligand>
</feature>
<feature type="binding site" evidence="1">
    <location>
        <position position="46"/>
    </location>
    <ligand>
        <name>substrate</name>
    </ligand>
</feature>
<feature type="binding site" evidence="1">
    <location>
        <position position="76"/>
    </location>
    <ligand>
        <name>substrate</name>
    </ligand>
</feature>
<feature type="binding site" evidence="1">
    <location>
        <position position="152"/>
    </location>
    <ligand>
        <name>substrate</name>
    </ligand>
</feature>
<feature type="binding site" evidence="1">
    <location>
        <position position="207"/>
    </location>
    <ligand>
        <name>substrate</name>
    </ligand>
</feature>
<feature type="binding site" evidence="1">
    <location>
        <position position="320"/>
    </location>
    <ligand>
        <name>substrate</name>
    </ligand>
</feature>
<feature type="site" description="Transition state stabilizer" evidence="1">
    <location>
        <position position="76"/>
    </location>
</feature>
<organism>
    <name type="scientific">Bacillus cytotoxicus (strain DSM 22905 / CIP 110041 / 391-98 / NVH 391-98)</name>
    <dbReference type="NCBI Taxonomy" id="315749"/>
    <lineage>
        <taxon>Bacteria</taxon>
        <taxon>Bacillati</taxon>
        <taxon>Bacillota</taxon>
        <taxon>Bacilli</taxon>
        <taxon>Bacillales</taxon>
        <taxon>Bacillaceae</taxon>
        <taxon>Bacillus</taxon>
        <taxon>Bacillus cereus group</taxon>
    </lineage>
</organism>
<keyword id="KW-0963">Cytoplasm</keyword>
<keyword id="KW-0210">Decarboxylase</keyword>
<keyword id="KW-0456">Lyase</keyword>
<keyword id="KW-0627">Porphyrin biosynthesis</keyword>
<reference key="1">
    <citation type="journal article" date="2008" name="Chem. Biol. Interact.">
        <title>Extending the Bacillus cereus group genomics to putative food-borne pathogens of different toxicity.</title>
        <authorList>
            <person name="Lapidus A."/>
            <person name="Goltsman E."/>
            <person name="Auger S."/>
            <person name="Galleron N."/>
            <person name="Segurens B."/>
            <person name="Dossat C."/>
            <person name="Land M.L."/>
            <person name="Broussolle V."/>
            <person name="Brillard J."/>
            <person name="Guinebretiere M.-H."/>
            <person name="Sanchis V."/>
            <person name="Nguen-the C."/>
            <person name="Lereclus D."/>
            <person name="Richardson P."/>
            <person name="Wincker P."/>
            <person name="Weissenbach J."/>
            <person name="Ehrlich S.D."/>
            <person name="Sorokin A."/>
        </authorList>
    </citation>
    <scope>NUCLEOTIDE SEQUENCE [LARGE SCALE GENOMIC DNA]</scope>
    <source>
        <strain>DSM 22905 / CIP 110041 / 391-98 / NVH 391-98</strain>
    </source>
</reference>
<dbReference type="EC" id="4.1.1.37" evidence="1"/>
<dbReference type="EMBL" id="CP000764">
    <property type="protein sequence ID" value="ABS21160.1"/>
    <property type="status" value="ALT_INIT"/>
    <property type="molecule type" value="Genomic_DNA"/>
</dbReference>
<dbReference type="RefSeq" id="WP_041809512.1">
    <property type="nucleotide sequence ID" value="NC_009674.1"/>
</dbReference>
<dbReference type="SMR" id="A7GM02"/>
<dbReference type="STRING" id="315749.Bcer98_0824"/>
<dbReference type="GeneID" id="33896189"/>
<dbReference type="KEGG" id="bcy:Bcer98_0824"/>
<dbReference type="eggNOG" id="COG0407">
    <property type="taxonomic scope" value="Bacteria"/>
</dbReference>
<dbReference type="HOGENOM" id="CLU_040933_0_1_9"/>
<dbReference type="OrthoDB" id="9806656at2"/>
<dbReference type="UniPathway" id="UPA00251">
    <property type="reaction ID" value="UER00321"/>
</dbReference>
<dbReference type="Proteomes" id="UP000002300">
    <property type="component" value="Chromosome"/>
</dbReference>
<dbReference type="GO" id="GO:0005829">
    <property type="term" value="C:cytosol"/>
    <property type="evidence" value="ECO:0007669"/>
    <property type="project" value="TreeGrafter"/>
</dbReference>
<dbReference type="GO" id="GO:0004853">
    <property type="term" value="F:uroporphyrinogen decarboxylase activity"/>
    <property type="evidence" value="ECO:0007669"/>
    <property type="project" value="UniProtKB-UniRule"/>
</dbReference>
<dbReference type="GO" id="GO:0006782">
    <property type="term" value="P:protoporphyrinogen IX biosynthetic process"/>
    <property type="evidence" value="ECO:0007669"/>
    <property type="project" value="UniProtKB-UniRule"/>
</dbReference>
<dbReference type="CDD" id="cd00717">
    <property type="entry name" value="URO-D"/>
    <property type="match status" value="1"/>
</dbReference>
<dbReference type="FunFam" id="3.20.20.210:FF:000005">
    <property type="entry name" value="Uroporphyrinogen decarboxylase"/>
    <property type="match status" value="1"/>
</dbReference>
<dbReference type="Gene3D" id="3.20.20.210">
    <property type="match status" value="1"/>
</dbReference>
<dbReference type="HAMAP" id="MF_00218">
    <property type="entry name" value="URO_D"/>
    <property type="match status" value="1"/>
</dbReference>
<dbReference type="InterPro" id="IPR038071">
    <property type="entry name" value="UROD/MetE-like_sf"/>
</dbReference>
<dbReference type="InterPro" id="IPR006361">
    <property type="entry name" value="Uroporphyrinogen_deCO2ase_HemE"/>
</dbReference>
<dbReference type="InterPro" id="IPR000257">
    <property type="entry name" value="Uroporphyrinogen_deCOase"/>
</dbReference>
<dbReference type="NCBIfam" id="TIGR01464">
    <property type="entry name" value="hemE"/>
    <property type="match status" value="1"/>
</dbReference>
<dbReference type="PANTHER" id="PTHR21091">
    <property type="entry name" value="METHYLTETRAHYDROFOLATE:HOMOCYSTEINE METHYLTRANSFERASE RELATED"/>
    <property type="match status" value="1"/>
</dbReference>
<dbReference type="PANTHER" id="PTHR21091:SF169">
    <property type="entry name" value="UROPORPHYRINOGEN DECARBOXYLASE"/>
    <property type="match status" value="1"/>
</dbReference>
<dbReference type="Pfam" id="PF01208">
    <property type="entry name" value="URO-D"/>
    <property type="match status" value="1"/>
</dbReference>
<dbReference type="SUPFAM" id="SSF51726">
    <property type="entry name" value="UROD/MetE-like"/>
    <property type="match status" value="1"/>
</dbReference>
<dbReference type="PROSITE" id="PS00906">
    <property type="entry name" value="UROD_1"/>
    <property type="match status" value="1"/>
</dbReference>
<dbReference type="PROSITE" id="PS00907">
    <property type="entry name" value="UROD_2"/>
    <property type="match status" value="1"/>
</dbReference>
<sequence length="348" mass="39325">MVRNINETFLKACKGERTDYVPAWYMRQAGRSQPEYRKIKEKYSLFEITHNPELCAYVTKLPVDQYNVDAAILYKDIMSPLPAIGVDVEIKSGIGPVIENPIRSMQDVEKLGEIHPEEDVPYILDTIRLLTAEMLDVPLIGFSGAPFTLASYMIEGGPSRNYHKTKAFMYAEPKAWFALMDKLSDMVIAYLKAQIQAGAKAVQVFDSWVGTVNVADYRIFIKPAMERIFAQVREMNVPMIMHGVGAGHLANEWNDLPLDVVGLDWRLSIEEARTRGIHKAVQGNMDPSLLLAPWNVIEEHVKGILDQGMKQPGYVFNLGHGVFPEVNPDTLKRLTAFIHEYSKEQLAK</sequence>
<evidence type="ECO:0000255" key="1">
    <source>
        <dbReference type="HAMAP-Rule" id="MF_00218"/>
    </source>
</evidence>
<evidence type="ECO:0000305" key="2"/>
<gene>
    <name evidence="1" type="primary">hemE</name>
    <name type="ordered locus">Bcer98_0824</name>
</gene>
<protein>
    <recommendedName>
        <fullName evidence="1">Uroporphyrinogen decarboxylase</fullName>
        <shortName evidence="1">UPD</shortName>
        <shortName evidence="1">URO-D</shortName>
        <ecNumber evidence="1">4.1.1.37</ecNumber>
    </recommendedName>
</protein>
<proteinExistence type="inferred from homology"/>
<comment type="function">
    <text evidence="1">Catalyzes the decarboxylation of four acetate groups of uroporphyrinogen-III to yield coproporphyrinogen-III.</text>
</comment>
<comment type="catalytic activity">
    <reaction evidence="1">
        <text>uroporphyrinogen III + 4 H(+) = coproporphyrinogen III + 4 CO2</text>
        <dbReference type="Rhea" id="RHEA:19865"/>
        <dbReference type="ChEBI" id="CHEBI:15378"/>
        <dbReference type="ChEBI" id="CHEBI:16526"/>
        <dbReference type="ChEBI" id="CHEBI:57308"/>
        <dbReference type="ChEBI" id="CHEBI:57309"/>
        <dbReference type="EC" id="4.1.1.37"/>
    </reaction>
</comment>
<comment type="pathway">
    <text evidence="1">Porphyrin-containing compound metabolism; protoporphyrin-IX biosynthesis; coproporphyrinogen-III from 5-aminolevulinate: step 4/4.</text>
</comment>
<comment type="subunit">
    <text evidence="1">Homodimer.</text>
</comment>
<comment type="subcellular location">
    <subcellularLocation>
        <location evidence="1">Cytoplasm</location>
    </subcellularLocation>
</comment>
<comment type="similarity">
    <text evidence="1">Belongs to the uroporphyrinogen decarboxylase family.</text>
</comment>
<comment type="sequence caution" evidence="2">
    <conflict type="erroneous initiation">
        <sequence resource="EMBL-CDS" id="ABS21160"/>
    </conflict>
</comment>